<protein>
    <recommendedName>
        <fullName>UPF0764 protein C16orf89 homolog</fullName>
    </recommendedName>
</protein>
<comment type="subunit">
    <text evidence="1">Homodimer.</text>
</comment>
<comment type="subcellular location">
    <subcellularLocation>
        <location evidence="1">Secreted</location>
    </subcellularLocation>
</comment>
<comment type="similarity">
    <text evidence="3">Belongs to the UPF0764 family.</text>
</comment>
<feature type="signal peptide" evidence="2">
    <location>
        <begin position="1"/>
        <end position="25"/>
    </location>
</feature>
<feature type="chain" id="PRO_0000397602" description="UPF0764 protein C16orf89 homolog">
    <location>
        <begin position="26"/>
        <end position="351"/>
    </location>
</feature>
<feature type="sequence conflict" description="In Ref. 2; AAI52291." evidence="3" ref="2">
    <original>I</original>
    <variation>T</variation>
    <location>
        <position position="20"/>
    </location>
</feature>
<evidence type="ECO:0000250" key="1"/>
<evidence type="ECO:0000255" key="2"/>
<evidence type="ECO:0000305" key="3"/>
<sequence length="351" mass="39925">MKSLKMLYPLFMLLVLSSKIDLSNQDVIDNILMSLSKGITYFDMQGSNINLDGVVGYIILQAQLREATRTWPHSDFLSLSQRAAAISMLKRLSKSLSTAASTLQETDPKYFKEFEPILDSSFWSLPGEWSSTDPSLVYTSVRAMECYDEHMSDKCMTFLLGTWKDNGTPCIVTKTCRDTMTQFGCPHYSLSHQLLYFMIGTMKGCSKMLKGDLRLSRVNITVGHYKRIFCSNMMKSNQDIFKNSLTGQMQDIFIENILLCGLVGFSDFYKLDWLQSILTWQDQEAGCFGKEEDISHIFEEFLDAPHKRVKRREKTLTDGCSSHMTGVAVSALGGFLNFYLSEQDITKRPII</sequence>
<keyword id="KW-1185">Reference proteome</keyword>
<keyword id="KW-0964">Secreted</keyword>
<keyword id="KW-0732">Signal</keyword>
<organism>
    <name type="scientific">Danio rerio</name>
    <name type="common">Zebrafish</name>
    <name type="synonym">Brachydanio rerio</name>
    <dbReference type="NCBI Taxonomy" id="7955"/>
    <lineage>
        <taxon>Eukaryota</taxon>
        <taxon>Metazoa</taxon>
        <taxon>Chordata</taxon>
        <taxon>Craniata</taxon>
        <taxon>Vertebrata</taxon>
        <taxon>Euteleostomi</taxon>
        <taxon>Actinopterygii</taxon>
        <taxon>Neopterygii</taxon>
        <taxon>Teleostei</taxon>
        <taxon>Ostariophysi</taxon>
        <taxon>Cypriniformes</taxon>
        <taxon>Danionidae</taxon>
        <taxon>Danioninae</taxon>
        <taxon>Danio</taxon>
    </lineage>
</organism>
<name>CP089_DANRE</name>
<dbReference type="EMBL" id="BX510989">
    <property type="status" value="NOT_ANNOTATED_CDS"/>
    <property type="molecule type" value="Genomic_DNA"/>
</dbReference>
<dbReference type="EMBL" id="BC152290">
    <property type="protein sequence ID" value="AAI52291.1"/>
    <property type="molecule type" value="mRNA"/>
</dbReference>
<dbReference type="RefSeq" id="NP_001333209.1">
    <property type="nucleotide sequence ID" value="NM_001346280.1"/>
</dbReference>
<dbReference type="FunCoup" id="A7MCS3">
    <property type="interactions" value="1007"/>
</dbReference>
<dbReference type="PaxDb" id="7955-ENSDARP00000102869"/>
<dbReference type="Ensembl" id="ENSDART00000114319">
    <property type="protein sequence ID" value="ENSDARP00000102869"/>
    <property type="gene ID" value="ENSDARG00000075345"/>
</dbReference>
<dbReference type="GeneID" id="566173"/>
<dbReference type="KEGG" id="dre:566173"/>
<dbReference type="AGR" id="ZFIN:ZDB-GENE-120215-154"/>
<dbReference type="ZFIN" id="ZDB-GENE-120215-154">
    <property type="gene designation" value="si:ch211-76l23.7"/>
</dbReference>
<dbReference type="eggNOG" id="ENOG502RBYN">
    <property type="taxonomic scope" value="Eukaryota"/>
</dbReference>
<dbReference type="HOGENOM" id="CLU_051286_0_0_1"/>
<dbReference type="InParanoid" id="A7MCS3"/>
<dbReference type="OMA" id="CAISREC"/>
<dbReference type="OrthoDB" id="5949187at2759"/>
<dbReference type="PhylomeDB" id="A7MCS3"/>
<dbReference type="TreeFam" id="TF332081"/>
<dbReference type="PRO" id="PR:A7MCS3"/>
<dbReference type="Proteomes" id="UP000000437">
    <property type="component" value="Chromosome 3"/>
</dbReference>
<dbReference type="Bgee" id="ENSDARG00000075345">
    <property type="expression patterns" value="Expressed in brain and 6 other cell types or tissues"/>
</dbReference>
<dbReference type="GO" id="GO:0005829">
    <property type="term" value="C:cytosol"/>
    <property type="evidence" value="ECO:0000318"/>
    <property type="project" value="GO_Central"/>
</dbReference>
<dbReference type="GO" id="GO:0005576">
    <property type="term" value="C:extracellular region"/>
    <property type="evidence" value="ECO:0007669"/>
    <property type="project" value="UniProtKB-SubCell"/>
</dbReference>
<dbReference type="GO" id="GO:0016020">
    <property type="term" value="C:membrane"/>
    <property type="evidence" value="ECO:0000318"/>
    <property type="project" value="GO_Central"/>
</dbReference>
<dbReference type="InterPro" id="IPR031751">
    <property type="entry name" value="DUF4735"/>
</dbReference>
<dbReference type="PANTHER" id="PTHR33539">
    <property type="entry name" value="UPF0764 PROTEIN C16ORF89"/>
    <property type="match status" value="1"/>
</dbReference>
<dbReference type="PANTHER" id="PTHR33539:SF1">
    <property type="entry name" value="UPF0764 PROTEIN C16ORF89"/>
    <property type="match status" value="1"/>
</dbReference>
<dbReference type="Pfam" id="PF15882">
    <property type="entry name" value="DUF4735"/>
    <property type="match status" value="1"/>
</dbReference>
<proteinExistence type="evidence at transcript level"/>
<accession>A7MCS3</accession>
<reference key="1">
    <citation type="journal article" date="2013" name="Nature">
        <title>The zebrafish reference genome sequence and its relationship to the human genome.</title>
        <authorList>
            <person name="Howe K."/>
            <person name="Clark M.D."/>
            <person name="Torroja C.F."/>
            <person name="Torrance J."/>
            <person name="Berthelot C."/>
            <person name="Muffato M."/>
            <person name="Collins J.E."/>
            <person name="Humphray S."/>
            <person name="McLaren K."/>
            <person name="Matthews L."/>
            <person name="McLaren S."/>
            <person name="Sealy I."/>
            <person name="Caccamo M."/>
            <person name="Churcher C."/>
            <person name="Scott C."/>
            <person name="Barrett J.C."/>
            <person name="Koch R."/>
            <person name="Rauch G.J."/>
            <person name="White S."/>
            <person name="Chow W."/>
            <person name="Kilian B."/>
            <person name="Quintais L.T."/>
            <person name="Guerra-Assuncao J.A."/>
            <person name="Zhou Y."/>
            <person name="Gu Y."/>
            <person name="Yen J."/>
            <person name="Vogel J.H."/>
            <person name="Eyre T."/>
            <person name="Redmond S."/>
            <person name="Banerjee R."/>
            <person name="Chi J."/>
            <person name="Fu B."/>
            <person name="Langley E."/>
            <person name="Maguire S.F."/>
            <person name="Laird G.K."/>
            <person name="Lloyd D."/>
            <person name="Kenyon E."/>
            <person name="Donaldson S."/>
            <person name="Sehra H."/>
            <person name="Almeida-King J."/>
            <person name="Loveland J."/>
            <person name="Trevanion S."/>
            <person name="Jones M."/>
            <person name="Quail M."/>
            <person name="Willey D."/>
            <person name="Hunt A."/>
            <person name="Burton J."/>
            <person name="Sims S."/>
            <person name="McLay K."/>
            <person name="Plumb B."/>
            <person name="Davis J."/>
            <person name="Clee C."/>
            <person name="Oliver K."/>
            <person name="Clark R."/>
            <person name="Riddle C."/>
            <person name="Elliot D."/>
            <person name="Threadgold G."/>
            <person name="Harden G."/>
            <person name="Ware D."/>
            <person name="Begum S."/>
            <person name="Mortimore B."/>
            <person name="Kerry G."/>
            <person name="Heath P."/>
            <person name="Phillimore B."/>
            <person name="Tracey A."/>
            <person name="Corby N."/>
            <person name="Dunn M."/>
            <person name="Johnson C."/>
            <person name="Wood J."/>
            <person name="Clark S."/>
            <person name="Pelan S."/>
            <person name="Griffiths G."/>
            <person name="Smith M."/>
            <person name="Glithero R."/>
            <person name="Howden P."/>
            <person name="Barker N."/>
            <person name="Lloyd C."/>
            <person name="Stevens C."/>
            <person name="Harley J."/>
            <person name="Holt K."/>
            <person name="Panagiotidis G."/>
            <person name="Lovell J."/>
            <person name="Beasley H."/>
            <person name="Henderson C."/>
            <person name="Gordon D."/>
            <person name="Auger K."/>
            <person name="Wright D."/>
            <person name="Collins J."/>
            <person name="Raisen C."/>
            <person name="Dyer L."/>
            <person name="Leung K."/>
            <person name="Robertson L."/>
            <person name="Ambridge K."/>
            <person name="Leongamornlert D."/>
            <person name="McGuire S."/>
            <person name="Gilderthorp R."/>
            <person name="Griffiths C."/>
            <person name="Manthravadi D."/>
            <person name="Nichol S."/>
            <person name="Barker G."/>
            <person name="Whitehead S."/>
            <person name="Kay M."/>
            <person name="Brown J."/>
            <person name="Murnane C."/>
            <person name="Gray E."/>
            <person name="Humphries M."/>
            <person name="Sycamore N."/>
            <person name="Barker D."/>
            <person name="Saunders D."/>
            <person name="Wallis J."/>
            <person name="Babbage A."/>
            <person name="Hammond S."/>
            <person name="Mashreghi-Mohammadi M."/>
            <person name="Barr L."/>
            <person name="Martin S."/>
            <person name="Wray P."/>
            <person name="Ellington A."/>
            <person name="Matthews N."/>
            <person name="Ellwood M."/>
            <person name="Woodmansey R."/>
            <person name="Clark G."/>
            <person name="Cooper J."/>
            <person name="Tromans A."/>
            <person name="Grafham D."/>
            <person name="Skuce C."/>
            <person name="Pandian R."/>
            <person name="Andrews R."/>
            <person name="Harrison E."/>
            <person name="Kimberley A."/>
            <person name="Garnett J."/>
            <person name="Fosker N."/>
            <person name="Hall R."/>
            <person name="Garner P."/>
            <person name="Kelly D."/>
            <person name="Bird C."/>
            <person name="Palmer S."/>
            <person name="Gehring I."/>
            <person name="Berger A."/>
            <person name="Dooley C.M."/>
            <person name="Ersan-Urun Z."/>
            <person name="Eser C."/>
            <person name="Geiger H."/>
            <person name="Geisler M."/>
            <person name="Karotki L."/>
            <person name="Kirn A."/>
            <person name="Konantz J."/>
            <person name="Konantz M."/>
            <person name="Oberlander M."/>
            <person name="Rudolph-Geiger S."/>
            <person name="Teucke M."/>
            <person name="Lanz C."/>
            <person name="Raddatz G."/>
            <person name="Osoegawa K."/>
            <person name="Zhu B."/>
            <person name="Rapp A."/>
            <person name="Widaa S."/>
            <person name="Langford C."/>
            <person name="Yang F."/>
            <person name="Schuster S.C."/>
            <person name="Carter N.P."/>
            <person name="Harrow J."/>
            <person name="Ning Z."/>
            <person name="Herrero J."/>
            <person name="Searle S.M."/>
            <person name="Enright A."/>
            <person name="Geisler R."/>
            <person name="Plasterk R.H."/>
            <person name="Lee C."/>
            <person name="Westerfield M."/>
            <person name="de Jong P.J."/>
            <person name="Zon L.I."/>
            <person name="Postlethwait J.H."/>
            <person name="Nusslein-Volhard C."/>
            <person name="Hubbard T.J."/>
            <person name="Roest Crollius H."/>
            <person name="Rogers J."/>
            <person name="Stemple D.L."/>
        </authorList>
    </citation>
    <scope>NUCLEOTIDE SEQUENCE [LARGE SCALE GENOMIC DNA]</scope>
    <source>
        <strain>Tuebingen</strain>
    </source>
</reference>
<reference key="2">
    <citation type="submission" date="2007-08" db="EMBL/GenBank/DDBJ databases">
        <authorList>
            <consortium name="NIH - Zebrafish Gene Collection (ZGC) project"/>
        </authorList>
    </citation>
    <scope>NUCLEOTIDE SEQUENCE [LARGE SCALE MRNA]</scope>
    <source>
        <tissue>Embryo</tissue>
    </source>
</reference>